<feature type="transit peptide" description="Mitochondrion">
    <location>
        <begin position="1"/>
        <end position="68"/>
    </location>
</feature>
<feature type="chain" id="PRO_0000020474" description="Dihydrolipoyllysine-residue succinyltransferase component of 2-oxoglutarate dehydrogenase complex, mitochondrial">
    <location>
        <begin position="69"/>
        <end position="455"/>
    </location>
</feature>
<feature type="domain" description="Lipoyl-binding" evidence="4">
    <location>
        <begin position="71"/>
        <end position="145"/>
    </location>
</feature>
<feature type="region of interest" description="Disordered" evidence="5">
    <location>
        <begin position="153"/>
        <end position="214"/>
    </location>
</feature>
<feature type="region of interest" description="Catalytic">
    <location>
        <begin position="221"/>
        <end position="453"/>
    </location>
</feature>
<feature type="compositionally biased region" description="Low complexity" evidence="5">
    <location>
        <begin position="153"/>
        <end position="173"/>
    </location>
</feature>
<feature type="compositionally biased region" description="Pro residues" evidence="5">
    <location>
        <begin position="174"/>
        <end position="195"/>
    </location>
</feature>
<feature type="active site" evidence="6">
    <location>
        <position position="426"/>
    </location>
</feature>
<feature type="active site" evidence="6">
    <location>
        <position position="430"/>
    </location>
</feature>
<feature type="modified residue" description="Phosphoserine" evidence="3">
    <location>
        <position position="82"/>
    </location>
</feature>
<feature type="modified residue" description="N6-lipoyllysine" evidence="4">
    <location>
        <position position="111"/>
    </location>
</feature>
<feature type="modified residue" description="N6-acetyllysine" evidence="3">
    <location>
        <position position="155"/>
    </location>
</feature>
<feature type="modified residue" description="N6-acetyllysine" evidence="3">
    <location>
        <position position="269"/>
    </location>
</feature>
<feature type="modified residue" description="N6-acetyllysine" evidence="3">
    <location>
        <position position="274"/>
    </location>
</feature>
<feature type="modified residue" description="N6-acetyllysine" evidence="3">
    <location>
        <position position="275"/>
    </location>
</feature>
<feature type="modified residue" description="N6-acetyllysine" evidence="3">
    <location>
        <position position="279"/>
    </location>
</feature>
<feature type="modified residue" description="N6-acetyllysine" evidence="3">
    <location>
        <position position="309"/>
    </location>
</feature>
<feature type="mutagenesis site" description="Loss of activity." evidence="6">
    <original>S</original>
    <variation>A</variation>
    <location>
        <position position="374"/>
    </location>
</feature>
<feature type="mutagenesis site" description="16% of activity." evidence="6">
    <original>H</original>
    <variation>C</variation>
    <location>
        <position position="426"/>
    </location>
</feature>
<feature type="mutagenesis site" description="Loss of activity." evidence="6">
    <original>D</original>
    <variation>A</variation>
    <variation>E</variation>
    <variation>N</variation>
    <location>
        <position position="430"/>
    </location>
</feature>
<feature type="mutagenesis site" description="Loss of activity." evidence="6">
    <original>LLL</original>
    <variation>AAA</variation>
    <variation>DDD</variation>
    <location>
        <begin position="451"/>
        <end position="453"/>
    </location>
</feature>
<protein>
    <recommendedName>
        <fullName evidence="2">Dihydrolipoyllysine-residue succinyltransferase component of 2-oxoglutarate dehydrogenase complex, mitochondrial</fullName>
        <ecNumber evidence="6">2.3.1.61</ecNumber>
    </recommendedName>
    <alternativeName>
        <fullName>2-oxoglutarate dehydrogenase complex component E2</fullName>
        <shortName>OGDC-E2</shortName>
    </alternativeName>
    <alternativeName>
        <fullName>Dihydrolipoamide succinyltransferase component of 2-oxoglutarate dehydrogenase complex</fullName>
    </alternativeName>
    <alternativeName>
        <fullName>E2K</fullName>
    </alternativeName>
    <alternativeName>
        <fullName>E2o</fullName>
        <shortName>PE2o</shortName>
    </alternativeName>
</protein>
<accession>Q9N0F1</accession>
<comment type="function">
    <text evidence="2 6">Dihydrolipoamide succinyltransferase (E2) component of the 2-oxoglutarate dehydrogenase complex (PubMed:10806400). The 2-oxoglutarate dehydrogenase complex catalyzes the overall conversion of 2-oxoglutarate to succinyl-CoA and CO(2) (PubMed:10806400). The 2-oxoglutarate dehydrogenase complex is mainly active in the mitochondrion (By similarity). A fraction of the 2-oxoglutarate dehydrogenase complex also localizes in the nucleus and is required for lysine succinylation of histones: associates with KAT2A on chromatin and provides succinyl-CoA to histone succinyltransferase KAT2A (By similarity).</text>
</comment>
<comment type="catalytic activity">
    <reaction evidence="6">
        <text>N(6)-[(R)-dihydrolipoyl]-L-lysyl-[protein] + succinyl-CoA = N(6)-[(R)-S(8)-succinyldihydrolipoyl]-L-lysyl-[protein] + CoA</text>
        <dbReference type="Rhea" id="RHEA:15213"/>
        <dbReference type="Rhea" id="RHEA-COMP:10475"/>
        <dbReference type="Rhea" id="RHEA-COMP:20092"/>
        <dbReference type="ChEBI" id="CHEBI:57287"/>
        <dbReference type="ChEBI" id="CHEBI:57292"/>
        <dbReference type="ChEBI" id="CHEBI:83100"/>
        <dbReference type="ChEBI" id="CHEBI:83120"/>
        <dbReference type="EC" id="2.3.1.61"/>
    </reaction>
    <physiologicalReaction direction="right-to-left" evidence="8">
        <dbReference type="Rhea" id="RHEA:15215"/>
    </physiologicalReaction>
</comment>
<comment type="cofactor">
    <cofactor evidence="1">
        <name>(R)-lipoate</name>
        <dbReference type="ChEBI" id="CHEBI:83088"/>
    </cofactor>
    <text evidence="1">Binds 1 lipoyl cofactor covalently.</text>
</comment>
<comment type="pathway">
    <text>Amino-acid degradation; L-lysine degradation via saccharopine pathway; glutaryl-CoA from L-lysine: step 6/6.</text>
</comment>
<comment type="pathway">
    <text evidence="6">Carbohydrate metabolism; tricarboxylic acid cycle.</text>
</comment>
<comment type="subunit">
    <text evidence="2 3">The 2-oxoglutarate dehydrogenase complex is composed of OGDH (2-oxoglutarate dehydrogenase; E1), DLST (dihydrolipoamide succinyltransferase; E2), DLD (dihydrolipoamide dehydrogenase; E3) and the assembly factor KGD4 (By similarity). It contains multiple copies of the three enzymatic components (E1, E2 and E3). In the nucleus, the 2-oxoglutarate dehydrogenase complex associates with KAT2A. Interacts with ABHD11; this interaction maintains the functional lipoylation of the 2-oxoglutarate dehydrogenase complex (By similarity).</text>
</comment>
<comment type="subcellular location">
    <subcellularLocation>
        <location evidence="8">Mitochondrion matrix</location>
    </subcellularLocation>
    <subcellularLocation>
        <location evidence="2">Nucleus</location>
    </subcellularLocation>
    <text evidence="2">Mainly localizes in the mitochondrion. A small fraction localizes to the nucleus, where the 2-oxoglutarate dehydrogenase complex is required for histone succinylation.</text>
</comment>
<comment type="similarity">
    <text evidence="7">Belongs to the 2-oxoacid dehydrogenase family.</text>
</comment>
<reference key="1">
    <citation type="journal article" date="2000" name="Eur. J. Biochem.">
        <title>Cloning, overexpression and mutagenesis of cDNA encoding dihydrolipoamide succinyltransferase component of the porcine 2-oxoglutarate dehydrogenase complex.</title>
        <authorList>
            <person name="Koike K."/>
            <person name="Suematsu T."/>
            <person name="Ehara M."/>
        </authorList>
    </citation>
    <scope>NUCLEOTIDE SEQUENCE [MRNA]</scope>
    <scope>PARTIAL PROTEIN SEQUENCE</scope>
    <scope>FUNCTION</scope>
    <scope>CATALYTIC ACTIVITY</scope>
    <scope>PATHWAY</scope>
    <scope>SUBCELLULAR LOCATION</scope>
    <scope>MUTAGENESIS OF SER-374; HIS-426; ASP-430 AND 451-LEU--LEU-453</scope>
    <scope>ACTIVE SITE</scope>
    <source>
        <tissue>Brain cortex</tissue>
        <tissue>Heart</tissue>
    </source>
</reference>
<keyword id="KW-0002">3D-structure</keyword>
<keyword id="KW-0007">Acetylation</keyword>
<keyword id="KW-0012">Acyltransferase</keyword>
<keyword id="KW-0903">Direct protein sequencing</keyword>
<keyword id="KW-0450">Lipoyl</keyword>
<keyword id="KW-0496">Mitochondrion</keyword>
<keyword id="KW-0539">Nucleus</keyword>
<keyword id="KW-0597">Phosphoprotein</keyword>
<keyword id="KW-1185">Reference proteome</keyword>
<keyword id="KW-0808">Transferase</keyword>
<keyword id="KW-0809">Transit peptide</keyword>
<keyword id="KW-0816">Tricarboxylic acid cycle</keyword>
<evidence type="ECO:0000250" key="1">
    <source>
        <dbReference type="UniProtKB" id="P11179"/>
    </source>
</evidence>
<evidence type="ECO:0000250" key="2">
    <source>
        <dbReference type="UniProtKB" id="P36957"/>
    </source>
</evidence>
<evidence type="ECO:0000250" key="3">
    <source>
        <dbReference type="UniProtKB" id="Q9D2G2"/>
    </source>
</evidence>
<evidence type="ECO:0000255" key="4">
    <source>
        <dbReference type="PROSITE-ProRule" id="PRU01066"/>
    </source>
</evidence>
<evidence type="ECO:0000256" key="5">
    <source>
        <dbReference type="SAM" id="MobiDB-lite"/>
    </source>
</evidence>
<evidence type="ECO:0000269" key="6">
    <source>
    </source>
</evidence>
<evidence type="ECO:0000305" key="7"/>
<evidence type="ECO:0000305" key="8">
    <source>
    </source>
</evidence>
<gene>
    <name evidence="2" type="primary">DLST</name>
</gene>
<organism>
    <name type="scientific">Sus scrofa</name>
    <name type="common">Pig</name>
    <dbReference type="NCBI Taxonomy" id="9823"/>
    <lineage>
        <taxon>Eukaryota</taxon>
        <taxon>Metazoa</taxon>
        <taxon>Chordata</taxon>
        <taxon>Craniata</taxon>
        <taxon>Vertebrata</taxon>
        <taxon>Euteleostomi</taxon>
        <taxon>Mammalia</taxon>
        <taxon>Eutheria</taxon>
        <taxon>Laurasiatheria</taxon>
        <taxon>Artiodactyla</taxon>
        <taxon>Suina</taxon>
        <taxon>Suidae</taxon>
        <taxon>Sus</taxon>
    </lineage>
</organism>
<dbReference type="EC" id="2.3.1.61" evidence="6"/>
<dbReference type="EMBL" id="AB035206">
    <property type="protein sequence ID" value="BAA95700.1"/>
    <property type="molecule type" value="mRNA"/>
</dbReference>
<dbReference type="RefSeq" id="NP_999562.1">
    <property type="nucleotide sequence ID" value="NM_214397.1"/>
</dbReference>
<dbReference type="PDB" id="8X02">
    <property type="method" value="EM"/>
    <property type="resolution" value="3.30 A"/>
    <property type="chains" value="A/B/C/D/E/F/G/H/I/J/K/L/M/N/O/P/Q/R/S/T/U/V/W/X=1-455"/>
</dbReference>
<dbReference type="PDBsum" id="8X02"/>
<dbReference type="EMDB" id="EMD-37965"/>
<dbReference type="SMR" id="Q9N0F1"/>
<dbReference type="FunCoup" id="Q9N0F1">
    <property type="interactions" value="2239"/>
</dbReference>
<dbReference type="STRING" id="9823.ENSSSCP00000064766"/>
<dbReference type="GlyGen" id="Q9N0F1">
    <property type="glycosylation" value="1 site"/>
</dbReference>
<dbReference type="PaxDb" id="9823-ENSSSCP00000002572"/>
<dbReference type="PeptideAtlas" id="Q9N0F1"/>
<dbReference type="Ensembl" id="ENSSSCT00110059495">
    <property type="protein sequence ID" value="ENSSSCP00110041461"/>
    <property type="gene ID" value="ENSSSCG00110031157"/>
</dbReference>
<dbReference type="GeneID" id="397690"/>
<dbReference type="KEGG" id="ssc:397690"/>
<dbReference type="CTD" id="1743"/>
<dbReference type="eggNOG" id="KOG0559">
    <property type="taxonomic scope" value="Eukaryota"/>
</dbReference>
<dbReference type="HOGENOM" id="CLU_016733_0_0_1"/>
<dbReference type="InParanoid" id="Q9N0F1"/>
<dbReference type="OMA" id="NMPQTAV"/>
<dbReference type="OrthoDB" id="5391403at2759"/>
<dbReference type="TreeFam" id="TF314164"/>
<dbReference type="SABIO-RK" id="Q9N0F1"/>
<dbReference type="UniPathway" id="UPA00223"/>
<dbReference type="UniPathway" id="UPA00868">
    <property type="reaction ID" value="UER00840"/>
</dbReference>
<dbReference type="Proteomes" id="UP000008227">
    <property type="component" value="Unplaced"/>
</dbReference>
<dbReference type="Proteomes" id="UP000314985">
    <property type="component" value="Unplaced"/>
</dbReference>
<dbReference type="Proteomes" id="UP000694570">
    <property type="component" value="Unplaced"/>
</dbReference>
<dbReference type="Proteomes" id="UP000694571">
    <property type="component" value="Unplaced"/>
</dbReference>
<dbReference type="Proteomes" id="UP000694720">
    <property type="component" value="Unplaced"/>
</dbReference>
<dbReference type="Proteomes" id="UP000694722">
    <property type="component" value="Unplaced"/>
</dbReference>
<dbReference type="Proteomes" id="UP000694723">
    <property type="component" value="Unplaced"/>
</dbReference>
<dbReference type="Proteomes" id="UP000694724">
    <property type="component" value="Unplaced"/>
</dbReference>
<dbReference type="Proteomes" id="UP000694725">
    <property type="component" value="Unplaced"/>
</dbReference>
<dbReference type="Proteomes" id="UP000694726">
    <property type="component" value="Unplaced"/>
</dbReference>
<dbReference type="Proteomes" id="UP000694727">
    <property type="component" value="Unplaced"/>
</dbReference>
<dbReference type="Proteomes" id="UP000694728">
    <property type="component" value="Unplaced"/>
</dbReference>
<dbReference type="GO" id="GO:0005759">
    <property type="term" value="C:mitochondrial matrix"/>
    <property type="evidence" value="ECO:0007669"/>
    <property type="project" value="UniProtKB-SubCell"/>
</dbReference>
<dbReference type="GO" id="GO:0005739">
    <property type="term" value="C:mitochondrion"/>
    <property type="evidence" value="ECO:0000250"/>
    <property type="project" value="UniProtKB"/>
</dbReference>
<dbReference type="GO" id="GO:0005634">
    <property type="term" value="C:nucleus"/>
    <property type="evidence" value="ECO:0000250"/>
    <property type="project" value="UniProtKB"/>
</dbReference>
<dbReference type="GO" id="GO:0045252">
    <property type="term" value="C:oxoglutarate dehydrogenase complex"/>
    <property type="evidence" value="ECO:0000250"/>
    <property type="project" value="UniProtKB"/>
</dbReference>
<dbReference type="GO" id="GO:0004149">
    <property type="term" value="F:dihydrolipoyllysine-residue succinyltransferase activity"/>
    <property type="evidence" value="ECO:0000314"/>
    <property type="project" value="UniProtKB"/>
</dbReference>
<dbReference type="GO" id="GO:0006103">
    <property type="term" value="P:2-oxoglutarate metabolic process"/>
    <property type="evidence" value="ECO:0000314"/>
    <property type="project" value="UniProtKB"/>
</dbReference>
<dbReference type="GO" id="GO:0033512">
    <property type="term" value="P:L-lysine catabolic process to acetyl-CoA via saccharopine"/>
    <property type="evidence" value="ECO:0007669"/>
    <property type="project" value="UniProtKB-UniPathway"/>
</dbReference>
<dbReference type="GO" id="GO:0006104">
    <property type="term" value="P:succinyl-CoA metabolic process"/>
    <property type="evidence" value="ECO:0000314"/>
    <property type="project" value="UniProtKB"/>
</dbReference>
<dbReference type="GO" id="GO:0006099">
    <property type="term" value="P:tricarboxylic acid cycle"/>
    <property type="evidence" value="ECO:0000250"/>
    <property type="project" value="UniProtKB"/>
</dbReference>
<dbReference type="CDD" id="cd06849">
    <property type="entry name" value="lipoyl_domain"/>
    <property type="match status" value="1"/>
</dbReference>
<dbReference type="FunFam" id="2.40.50.100:FF:000033">
    <property type="entry name" value="Dihydrolipoyllysine-residue succinyltransferase component of 2-oxoglutarate dehydrogenase complex, mitochondrial"/>
    <property type="match status" value="1"/>
</dbReference>
<dbReference type="FunFam" id="3.30.559.10:FF:000006">
    <property type="entry name" value="Dihydrolipoyllysine-residue succinyltransferase component of 2-oxoglutarate dehydrogenase complex, mitochondrial"/>
    <property type="match status" value="1"/>
</dbReference>
<dbReference type="Gene3D" id="2.40.50.100">
    <property type="match status" value="1"/>
</dbReference>
<dbReference type="Gene3D" id="3.30.559.10">
    <property type="entry name" value="Chloramphenicol acetyltransferase-like domain"/>
    <property type="match status" value="1"/>
</dbReference>
<dbReference type="InterPro" id="IPR003016">
    <property type="entry name" value="2-oxoA_DH_lipoyl-BS"/>
</dbReference>
<dbReference type="InterPro" id="IPR050537">
    <property type="entry name" value="2-oxoacid_dehydrogenase"/>
</dbReference>
<dbReference type="InterPro" id="IPR001078">
    <property type="entry name" value="2-oxoacid_DH_actylTfrase"/>
</dbReference>
<dbReference type="InterPro" id="IPR000089">
    <property type="entry name" value="Biotin_lipoyl"/>
</dbReference>
<dbReference type="InterPro" id="IPR023213">
    <property type="entry name" value="CAT-like_dom_sf"/>
</dbReference>
<dbReference type="InterPro" id="IPR011053">
    <property type="entry name" value="Single_hybrid_motif"/>
</dbReference>
<dbReference type="InterPro" id="IPR006255">
    <property type="entry name" value="SucB"/>
</dbReference>
<dbReference type="NCBIfam" id="TIGR01347">
    <property type="entry name" value="sucB"/>
    <property type="match status" value="1"/>
</dbReference>
<dbReference type="PANTHER" id="PTHR43416:SF5">
    <property type="entry name" value="DIHYDROLIPOYLLYSINE-RESIDUE SUCCINYLTRANSFERASE COMPONENT OF 2-OXOGLUTARATE DEHYDROGENASE COMPLEX, MITOCHONDRIAL"/>
    <property type="match status" value="1"/>
</dbReference>
<dbReference type="PANTHER" id="PTHR43416">
    <property type="entry name" value="DIHYDROLIPOYLLYSINE-RESIDUE SUCCINYLTRANSFERASE COMPONENT OF 2-OXOGLUTARATE DEHYDROGENASE COMPLEX, MITOCHONDRIAL-RELATED"/>
    <property type="match status" value="1"/>
</dbReference>
<dbReference type="Pfam" id="PF00198">
    <property type="entry name" value="2-oxoacid_dh"/>
    <property type="match status" value="1"/>
</dbReference>
<dbReference type="Pfam" id="PF00364">
    <property type="entry name" value="Biotin_lipoyl"/>
    <property type="match status" value="1"/>
</dbReference>
<dbReference type="SUPFAM" id="SSF52777">
    <property type="entry name" value="CoA-dependent acyltransferases"/>
    <property type="match status" value="1"/>
</dbReference>
<dbReference type="SUPFAM" id="SSF51230">
    <property type="entry name" value="Single hybrid motif"/>
    <property type="match status" value="1"/>
</dbReference>
<dbReference type="PROSITE" id="PS50968">
    <property type="entry name" value="BIOTINYL_LIPOYL"/>
    <property type="match status" value="1"/>
</dbReference>
<dbReference type="PROSITE" id="PS00189">
    <property type="entry name" value="LIPOYL"/>
    <property type="match status" value="1"/>
</dbReference>
<name>ODO2_PIG</name>
<proteinExistence type="evidence at protein level"/>
<sequence>MLSRSRCVSRAFSRSLSAFQKGNCPLGRRSLPGISLCQGPGYPDSRKIVISNSSVLNVRFFRTTAVCKDDVITVKTPAFAESVTEGDVRWEKAVGDTVAEDEVVCEIETDKTSVQVPSPANGVIEALLVPDGGKVEGGTPLFTLRKTGAAPAKAKPAEAPAAAAPKAEPAVSAVPPPPAASIPTQMPPVPSPPQPLTSKPVSAVKPTAAPPVAEPGAVKGLRAEHREKMNRMRQRIAQRLKEAQNTCAMLTTFNEIDMSNIQDMRARHKEAFLKKHNLKLGFMSAFVKASAFALQEQPVVNAVIDDTTKEVVYRDYIDISVAVATPRGLVVPVIRNVETMNYADIERTISELGEKARKNELAIEDMDGGTFTISNGGVFGSLFGTPIINPPQSAILGMHAIVDRPVAVGGKVEIRPMMYVALTYDHRLIDGREAVTFLRKIKAAVEDPRVLLLDL</sequence>